<reference key="1">
    <citation type="journal article" date="2004" name="Environ. Microbiol.">
        <title>The genome of Desulfotalea psychrophila, a sulfate-reducing bacterium from permanently cold Arctic sediments.</title>
        <authorList>
            <person name="Rabus R."/>
            <person name="Ruepp A."/>
            <person name="Frickey T."/>
            <person name="Rattei T."/>
            <person name="Fartmann B."/>
            <person name="Stark M."/>
            <person name="Bauer M."/>
            <person name="Zibat A."/>
            <person name="Lombardot T."/>
            <person name="Becker I."/>
            <person name="Amann J."/>
            <person name="Gellner K."/>
            <person name="Teeling H."/>
            <person name="Leuschner W.D."/>
            <person name="Gloeckner F.-O."/>
            <person name="Lupas A.N."/>
            <person name="Amann R."/>
            <person name="Klenk H.-P."/>
        </authorList>
    </citation>
    <scope>NUCLEOTIDE SEQUENCE [LARGE SCALE GENOMIC DNA]</scope>
    <source>
        <strain>DSM 12343 / LSv54</strain>
    </source>
</reference>
<gene>
    <name evidence="1" type="primary">rlmF</name>
    <name type="ordered locus">DP1289</name>
</gene>
<organism>
    <name type="scientific">Desulfotalea psychrophila (strain LSv54 / DSM 12343)</name>
    <dbReference type="NCBI Taxonomy" id="177439"/>
    <lineage>
        <taxon>Bacteria</taxon>
        <taxon>Pseudomonadati</taxon>
        <taxon>Thermodesulfobacteriota</taxon>
        <taxon>Desulfobulbia</taxon>
        <taxon>Desulfobulbales</taxon>
        <taxon>Desulfocapsaceae</taxon>
        <taxon>Desulfotalea</taxon>
    </lineage>
</organism>
<comment type="function">
    <text evidence="1">Specifically methylates the adenine in position 1618 of 23S rRNA.</text>
</comment>
<comment type="catalytic activity">
    <reaction evidence="1">
        <text>adenosine(1618) in 23S rRNA + S-adenosyl-L-methionine = N(6)-methyladenosine(1618) in 23S rRNA + S-adenosyl-L-homocysteine + H(+)</text>
        <dbReference type="Rhea" id="RHEA:16497"/>
        <dbReference type="Rhea" id="RHEA-COMP:10229"/>
        <dbReference type="Rhea" id="RHEA-COMP:10231"/>
        <dbReference type="ChEBI" id="CHEBI:15378"/>
        <dbReference type="ChEBI" id="CHEBI:57856"/>
        <dbReference type="ChEBI" id="CHEBI:59789"/>
        <dbReference type="ChEBI" id="CHEBI:74411"/>
        <dbReference type="ChEBI" id="CHEBI:74449"/>
        <dbReference type="EC" id="2.1.1.181"/>
    </reaction>
</comment>
<comment type="subcellular location">
    <subcellularLocation>
        <location evidence="1">Cytoplasm</location>
    </subcellularLocation>
</comment>
<comment type="similarity">
    <text evidence="1">Belongs to the methyltransferase superfamily. METTL16/RlmF family.</text>
</comment>
<protein>
    <recommendedName>
        <fullName evidence="1">Ribosomal RNA large subunit methyltransferase F</fullName>
        <ecNumber evidence="1">2.1.1.181</ecNumber>
    </recommendedName>
    <alternativeName>
        <fullName evidence="1">23S rRNA mA1618 methyltransferase</fullName>
    </alternativeName>
    <alternativeName>
        <fullName evidence="1">rRNA adenine N-6-methyltransferase</fullName>
    </alternativeName>
</protein>
<dbReference type="EC" id="2.1.1.181" evidence="1"/>
<dbReference type="EMBL" id="CR522870">
    <property type="protein sequence ID" value="CAG36018.1"/>
    <property type="molecule type" value="Genomic_DNA"/>
</dbReference>
<dbReference type="RefSeq" id="WP_011188530.1">
    <property type="nucleotide sequence ID" value="NC_006138.1"/>
</dbReference>
<dbReference type="SMR" id="Q6ANQ6"/>
<dbReference type="STRING" id="177439.DP1289"/>
<dbReference type="KEGG" id="dps:DP1289"/>
<dbReference type="eggNOG" id="COG3129">
    <property type="taxonomic scope" value="Bacteria"/>
</dbReference>
<dbReference type="HOGENOM" id="CLU_027534_3_0_7"/>
<dbReference type="OrthoDB" id="9800643at2"/>
<dbReference type="Proteomes" id="UP000000602">
    <property type="component" value="Chromosome"/>
</dbReference>
<dbReference type="GO" id="GO:0005737">
    <property type="term" value="C:cytoplasm"/>
    <property type="evidence" value="ECO:0007669"/>
    <property type="project" value="UniProtKB-SubCell"/>
</dbReference>
<dbReference type="GO" id="GO:0052907">
    <property type="term" value="F:23S rRNA (adenine(1618)-N(6))-methyltransferase activity"/>
    <property type="evidence" value="ECO:0007669"/>
    <property type="project" value="UniProtKB-EC"/>
</dbReference>
<dbReference type="GO" id="GO:0070475">
    <property type="term" value="P:rRNA base methylation"/>
    <property type="evidence" value="ECO:0007669"/>
    <property type="project" value="TreeGrafter"/>
</dbReference>
<dbReference type="CDD" id="cd02440">
    <property type="entry name" value="AdoMet_MTases"/>
    <property type="match status" value="1"/>
</dbReference>
<dbReference type="Gene3D" id="3.40.50.150">
    <property type="entry name" value="Vaccinia Virus protein VP39"/>
    <property type="match status" value="1"/>
</dbReference>
<dbReference type="HAMAP" id="MF_01848">
    <property type="entry name" value="23SrRNA_methyltr_F"/>
    <property type="match status" value="1"/>
</dbReference>
<dbReference type="InterPro" id="IPR010286">
    <property type="entry name" value="METTL16/RlmF"/>
</dbReference>
<dbReference type="InterPro" id="IPR016909">
    <property type="entry name" value="rRNA_lsu_MeTfrase_F"/>
</dbReference>
<dbReference type="InterPro" id="IPR029063">
    <property type="entry name" value="SAM-dependent_MTases_sf"/>
</dbReference>
<dbReference type="NCBIfam" id="NF008725">
    <property type="entry name" value="PRK11727.1"/>
    <property type="match status" value="1"/>
</dbReference>
<dbReference type="PANTHER" id="PTHR13393:SF0">
    <property type="entry name" value="RNA N6-ADENOSINE-METHYLTRANSFERASE METTL16"/>
    <property type="match status" value="1"/>
</dbReference>
<dbReference type="PANTHER" id="PTHR13393">
    <property type="entry name" value="SAM-DEPENDENT METHYLTRANSFERASE"/>
    <property type="match status" value="1"/>
</dbReference>
<dbReference type="Pfam" id="PF05971">
    <property type="entry name" value="Methyltransf_10"/>
    <property type="match status" value="1"/>
</dbReference>
<dbReference type="PIRSF" id="PIRSF029038">
    <property type="entry name" value="Mtase_YbiN_prd"/>
    <property type="match status" value="1"/>
</dbReference>
<dbReference type="SUPFAM" id="SSF53335">
    <property type="entry name" value="S-adenosyl-L-methionine-dependent methyltransferases"/>
    <property type="match status" value="1"/>
</dbReference>
<name>RLMF_DESPS</name>
<keyword id="KW-0963">Cytoplasm</keyword>
<keyword id="KW-0489">Methyltransferase</keyword>
<keyword id="KW-1185">Reference proteome</keyword>
<keyword id="KW-0698">rRNA processing</keyword>
<keyword id="KW-0949">S-adenosyl-L-methionine</keyword>
<keyword id="KW-0808">Transferase</keyword>
<proteinExistence type="inferred from homology"/>
<accession>Q6ANQ6</accession>
<feature type="chain" id="PRO_0000349902" description="Ribosomal RNA large subunit methyltransferase F">
    <location>
        <begin position="1"/>
        <end position="309"/>
    </location>
</feature>
<feature type="region of interest" description="Disordered" evidence="2">
    <location>
        <begin position="1"/>
        <end position="21"/>
    </location>
</feature>
<evidence type="ECO:0000255" key="1">
    <source>
        <dbReference type="HAMAP-Rule" id="MF_01848"/>
    </source>
</evidence>
<evidence type="ECO:0000256" key="2">
    <source>
        <dbReference type="SAM" id="MobiDB-lite"/>
    </source>
</evidence>
<sequence>MASQHDKKSVQSGLLHPRNPHRGRYDLDALCRTCPELKMHIQIKPTGDKTIDFSDAKAVLCLNRALLAHYYQVSNWQIPEGYLCPPIPGRADYIHYLADLLAEDLPTSAKGKKIRVLDIGTGANCIYPIIGSQSYGWHFVGTDIDPLAIKIAGMIVQANSCLNGKITLKQQLDKKLIFKGIINEDKFDLTMCNPPFHASLAEAEAGNQRKRKNLGHGKENRAQEKLNFGGQNAELWCPGGEIVFLRQMAEESVAFAKQVRWFSSLLSKGKNVAPLKKLLKQLGCKRIKVVEMAQGQKISRFIAWSFSQE</sequence>